<name>O5AR1_HUMAN</name>
<feature type="chain" id="PRO_0000150579" description="Olfactory receptor 5AR1">
    <location>
        <begin position="1"/>
        <end position="310"/>
    </location>
</feature>
<feature type="topological domain" description="Extracellular" evidence="2">
    <location>
        <begin position="1"/>
        <end position="28"/>
    </location>
</feature>
<feature type="transmembrane region" description="Helical; Name=1" evidence="2">
    <location>
        <begin position="29"/>
        <end position="49"/>
    </location>
</feature>
<feature type="topological domain" description="Cytoplasmic" evidence="2">
    <location>
        <begin position="50"/>
        <end position="58"/>
    </location>
</feature>
<feature type="transmembrane region" description="Helical; Name=2" evidence="2">
    <location>
        <begin position="59"/>
        <end position="79"/>
    </location>
</feature>
<feature type="topological domain" description="Extracellular" evidence="2">
    <location>
        <begin position="80"/>
        <end position="100"/>
    </location>
</feature>
<feature type="transmembrane region" description="Helical; Name=3" evidence="2">
    <location>
        <begin position="101"/>
        <end position="120"/>
    </location>
</feature>
<feature type="topological domain" description="Cytoplasmic" evidence="2">
    <location>
        <begin position="121"/>
        <end position="139"/>
    </location>
</feature>
<feature type="transmembrane region" description="Helical; Name=4" evidence="2">
    <location>
        <begin position="140"/>
        <end position="160"/>
    </location>
</feature>
<feature type="topological domain" description="Extracellular" evidence="2">
    <location>
        <begin position="161"/>
        <end position="205"/>
    </location>
</feature>
<feature type="transmembrane region" description="Helical; Name=5" evidence="2">
    <location>
        <begin position="206"/>
        <end position="226"/>
    </location>
</feature>
<feature type="topological domain" description="Cytoplasmic" evidence="2">
    <location>
        <begin position="227"/>
        <end position="239"/>
    </location>
</feature>
<feature type="transmembrane region" description="Helical; Name=6" evidence="2">
    <location>
        <begin position="240"/>
        <end position="260"/>
    </location>
</feature>
<feature type="topological domain" description="Extracellular" evidence="2">
    <location>
        <begin position="261"/>
        <end position="271"/>
    </location>
</feature>
<feature type="transmembrane region" description="Helical; Name=7" evidence="2">
    <location>
        <begin position="272"/>
        <end position="292"/>
    </location>
</feature>
<feature type="topological domain" description="Cytoplasmic" evidence="2">
    <location>
        <begin position="293"/>
        <end position="310"/>
    </location>
</feature>
<feature type="glycosylation site" description="N-linked (GlcNAc...) asparagine" evidence="2">
    <location>
        <position position="5"/>
    </location>
</feature>
<feature type="disulfide bond" evidence="3">
    <location>
        <begin position="97"/>
        <end position="189"/>
    </location>
</feature>
<feature type="sequence variant" id="VAR_062038" description="In dbSNP:rs56067375.">
    <original>I</original>
    <variation>V</variation>
    <location>
        <position position="225"/>
    </location>
</feature>
<reference key="1">
    <citation type="submission" date="2001-07" db="EMBL/GenBank/DDBJ databases">
        <title>Genome-wide discovery and analysis of human seven transmembrane helix receptor genes.</title>
        <authorList>
            <person name="Suwa M."/>
            <person name="Sato T."/>
            <person name="Okouchi I."/>
            <person name="Arita M."/>
            <person name="Futami K."/>
            <person name="Matsumoto S."/>
            <person name="Tsutsumi S."/>
            <person name="Aburatani H."/>
            <person name="Asai K."/>
            <person name="Akiyama Y."/>
        </authorList>
    </citation>
    <scope>NUCLEOTIDE SEQUENCE [GENOMIC DNA]</scope>
</reference>
<reference key="2">
    <citation type="journal article" date="2004" name="Proc. Natl. Acad. Sci. U.S.A.">
        <title>The human olfactory receptor gene family.</title>
        <authorList>
            <person name="Malnic B."/>
            <person name="Godfrey P.A."/>
            <person name="Buck L.B."/>
        </authorList>
    </citation>
    <scope>IDENTIFICATION</scope>
</reference>
<reference key="3">
    <citation type="journal article" date="2004" name="Proc. Natl. Acad. Sci. U.S.A.">
        <authorList>
            <person name="Malnic B."/>
            <person name="Godfrey P.A."/>
            <person name="Buck L.B."/>
        </authorList>
    </citation>
    <scope>ERRATUM OF PUBMED:14983052</scope>
</reference>
<reference key="4">
    <citation type="journal article" date="2007" name="PLoS Biol.">
        <title>Genetic elucidation of human hyperosmia to isovaleric acid.</title>
        <authorList>
            <person name="Menashe I."/>
            <person name="Abaffy T."/>
            <person name="Hasin Y."/>
            <person name="Goshen S."/>
            <person name="Yahalom V."/>
            <person name="Luetje C.W."/>
            <person name="Lancet D."/>
        </authorList>
    </citation>
    <scope>POLYMORPHISM</scope>
</reference>
<proteinExistence type="inferred from homology"/>
<protein>
    <recommendedName>
        <fullName evidence="4">Olfactory receptor 5AR1</fullName>
    </recommendedName>
    <alternativeName>
        <fullName>Olfactory receptor OR11-209</fullName>
    </alternativeName>
</protein>
<gene>
    <name evidence="5" type="primary">OR5AR1</name>
</gene>
<organism>
    <name type="scientific">Homo sapiens</name>
    <name type="common">Human</name>
    <dbReference type="NCBI Taxonomy" id="9606"/>
    <lineage>
        <taxon>Eukaryota</taxon>
        <taxon>Metazoa</taxon>
        <taxon>Chordata</taxon>
        <taxon>Craniata</taxon>
        <taxon>Vertebrata</taxon>
        <taxon>Euteleostomi</taxon>
        <taxon>Mammalia</taxon>
        <taxon>Eutheria</taxon>
        <taxon>Euarchontoglires</taxon>
        <taxon>Primates</taxon>
        <taxon>Haplorrhini</taxon>
        <taxon>Catarrhini</taxon>
        <taxon>Hominidae</taxon>
        <taxon>Homo</taxon>
    </lineage>
</organism>
<sequence length="310" mass="34815">MDKENSSMVTEFIFMGITQDPQMEIIFFVVFLIVYLVNVVGNIGMIILITTDTQLHTPMYFFLCNLSFVDLGYSSAIAPRMLADFLTNHKVISFSSCATQFAFFVGFVDAECYVLAAMAYGRFVAICRPLHYSTFMSKQVCLALMLGSYLAGLVSLVAHTTLTFSLSYCGSNIINHFFCEIPPLLALSCSDTYISEILLFSLCGFIEFSTILIIFISYTFILVAIIRMRSAEGRLKAFSTCGSHLTGITLFYGTVMFMYLRPTSSYSLDQDKWASVFYTVIIPMLNPLIYSLRNKDVKAAFKKLIGKKSQ</sequence>
<accession>Q8NGP9</accession>
<accession>Q6IF61</accession>
<dbReference type="EMBL" id="AB065740">
    <property type="protein sequence ID" value="BAC05961.1"/>
    <property type="molecule type" value="Genomic_DNA"/>
</dbReference>
<dbReference type="EMBL" id="BK004401">
    <property type="protein sequence ID" value="DAA04799.1"/>
    <property type="molecule type" value="Genomic_DNA"/>
</dbReference>
<dbReference type="RefSeq" id="NP_001004730.1">
    <property type="nucleotide sequence ID" value="NM_001004730.1"/>
</dbReference>
<dbReference type="SMR" id="Q8NGP9"/>
<dbReference type="BioGRID" id="128548">
    <property type="interactions" value="1"/>
</dbReference>
<dbReference type="FunCoup" id="Q8NGP9">
    <property type="interactions" value="417"/>
</dbReference>
<dbReference type="STRING" id="9606.ENSP00000485240"/>
<dbReference type="GlyCosmos" id="Q8NGP9">
    <property type="glycosylation" value="1 site, No reported glycans"/>
</dbReference>
<dbReference type="GlyGen" id="Q8NGP9">
    <property type="glycosylation" value="1 site"/>
</dbReference>
<dbReference type="iPTMnet" id="Q8NGP9"/>
<dbReference type="PhosphoSitePlus" id="Q8NGP9"/>
<dbReference type="BioMuta" id="OR5AR1"/>
<dbReference type="DMDM" id="37081363"/>
<dbReference type="jPOST" id="Q8NGP9"/>
<dbReference type="MassIVE" id="Q8NGP9"/>
<dbReference type="PaxDb" id="9606-ENSP00000485424"/>
<dbReference type="Antibodypedia" id="78755">
    <property type="antibodies" value="40 antibodies from 14 providers"/>
</dbReference>
<dbReference type="DNASU" id="219493"/>
<dbReference type="Ensembl" id="ENST00000624596.2">
    <property type="protein sequence ID" value="ENSP00000485240.1"/>
    <property type="gene ID" value="ENSG00000172459.5"/>
</dbReference>
<dbReference type="GeneID" id="219493"/>
<dbReference type="KEGG" id="hsa:219493"/>
<dbReference type="MANE-Select" id="ENST00000624596.2">
    <property type="protein sequence ID" value="ENSP00000485240.1"/>
    <property type="RefSeq nucleotide sequence ID" value="NM_001004730.1"/>
    <property type="RefSeq protein sequence ID" value="NP_001004730.1"/>
</dbReference>
<dbReference type="UCSC" id="uc010rjm.2">
    <property type="organism name" value="human"/>
</dbReference>
<dbReference type="AGR" id="HGNC:15260"/>
<dbReference type="CTD" id="219493"/>
<dbReference type="GeneCards" id="OR5AR1"/>
<dbReference type="HGNC" id="HGNC:15260">
    <property type="gene designation" value="OR5AR1"/>
</dbReference>
<dbReference type="HPA" id="ENSG00000172459">
    <property type="expression patterns" value="Not detected"/>
</dbReference>
<dbReference type="neXtProt" id="NX_Q8NGP9"/>
<dbReference type="PharmGKB" id="PA32471"/>
<dbReference type="VEuPathDB" id="HostDB:ENSG00000172459"/>
<dbReference type="eggNOG" id="ENOG502SHXT">
    <property type="taxonomic scope" value="Eukaryota"/>
</dbReference>
<dbReference type="GeneTree" id="ENSGT01130000278309"/>
<dbReference type="HOGENOM" id="CLU_012526_1_0_1"/>
<dbReference type="InParanoid" id="Q8NGP9"/>
<dbReference type="OMA" id="FLTNHKV"/>
<dbReference type="OrthoDB" id="9575991at2759"/>
<dbReference type="PAN-GO" id="Q8NGP9">
    <property type="GO annotations" value="2 GO annotations based on evolutionary models"/>
</dbReference>
<dbReference type="PhylomeDB" id="Q8NGP9"/>
<dbReference type="TreeFam" id="TF352753"/>
<dbReference type="PathwayCommons" id="Q8NGP9"/>
<dbReference type="Reactome" id="R-HSA-9752946">
    <property type="pathway name" value="Expression and translocation of olfactory receptors"/>
</dbReference>
<dbReference type="BioGRID-ORCS" id="219493">
    <property type="hits" value="18 hits in 751 CRISPR screens"/>
</dbReference>
<dbReference type="GeneWiki" id="OR5AR1"/>
<dbReference type="GenomeRNAi" id="219493"/>
<dbReference type="Pharos" id="Q8NGP9">
    <property type="development level" value="Tdark"/>
</dbReference>
<dbReference type="PRO" id="PR:Q8NGP9"/>
<dbReference type="Proteomes" id="UP000005640">
    <property type="component" value="Chromosome 11"/>
</dbReference>
<dbReference type="RNAct" id="Q8NGP9">
    <property type="molecule type" value="protein"/>
</dbReference>
<dbReference type="ExpressionAtlas" id="Q8NGP9">
    <property type="expression patterns" value="baseline and differential"/>
</dbReference>
<dbReference type="GO" id="GO:0005886">
    <property type="term" value="C:plasma membrane"/>
    <property type="evidence" value="ECO:0007669"/>
    <property type="project" value="UniProtKB-SubCell"/>
</dbReference>
<dbReference type="GO" id="GO:0005507">
    <property type="term" value="F:copper ion binding"/>
    <property type="evidence" value="ECO:0007669"/>
    <property type="project" value="Ensembl"/>
</dbReference>
<dbReference type="GO" id="GO:0004930">
    <property type="term" value="F:G protein-coupled receptor activity"/>
    <property type="evidence" value="ECO:0007669"/>
    <property type="project" value="UniProtKB-KW"/>
</dbReference>
<dbReference type="GO" id="GO:0005549">
    <property type="term" value="F:odorant binding"/>
    <property type="evidence" value="ECO:0000318"/>
    <property type="project" value="GO_Central"/>
</dbReference>
<dbReference type="GO" id="GO:0004984">
    <property type="term" value="F:olfactory receptor activity"/>
    <property type="evidence" value="ECO:0000318"/>
    <property type="project" value="GO_Central"/>
</dbReference>
<dbReference type="CDD" id="cd15944">
    <property type="entry name" value="7tmA_OR5AR1-like"/>
    <property type="match status" value="1"/>
</dbReference>
<dbReference type="FunFam" id="1.20.1070.10:FF:000003">
    <property type="entry name" value="Olfactory receptor"/>
    <property type="match status" value="1"/>
</dbReference>
<dbReference type="Gene3D" id="1.20.1070.10">
    <property type="entry name" value="Rhodopsin 7-helix transmembrane proteins"/>
    <property type="match status" value="1"/>
</dbReference>
<dbReference type="InterPro" id="IPR000276">
    <property type="entry name" value="GPCR_Rhodpsn"/>
</dbReference>
<dbReference type="InterPro" id="IPR017452">
    <property type="entry name" value="GPCR_Rhodpsn_7TM"/>
</dbReference>
<dbReference type="InterPro" id="IPR000725">
    <property type="entry name" value="Olfact_rcpt"/>
</dbReference>
<dbReference type="PANTHER" id="PTHR48018">
    <property type="entry name" value="OLFACTORY RECEPTOR"/>
    <property type="match status" value="1"/>
</dbReference>
<dbReference type="Pfam" id="PF13853">
    <property type="entry name" value="7tm_4"/>
    <property type="match status" value="1"/>
</dbReference>
<dbReference type="PRINTS" id="PR00237">
    <property type="entry name" value="GPCRRHODOPSN"/>
</dbReference>
<dbReference type="PRINTS" id="PR00245">
    <property type="entry name" value="OLFACTORYR"/>
</dbReference>
<dbReference type="SUPFAM" id="SSF81321">
    <property type="entry name" value="Family A G protein-coupled receptor-like"/>
    <property type="match status" value="1"/>
</dbReference>
<dbReference type="PROSITE" id="PS50262">
    <property type="entry name" value="G_PROTEIN_RECEP_F1_2"/>
    <property type="match status" value="1"/>
</dbReference>
<evidence type="ECO:0000250" key="1">
    <source>
        <dbReference type="UniProtKB" id="Q8VGS3"/>
    </source>
</evidence>
<evidence type="ECO:0000255" key="2"/>
<evidence type="ECO:0000255" key="3">
    <source>
        <dbReference type="PROSITE-ProRule" id="PRU00521"/>
    </source>
</evidence>
<evidence type="ECO:0000305" key="4"/>
<evidence type="ECO:0000312" key="5">
    <source>
        <dbReference type="HGNC" id="HGNC:15260"/>
    </source>
</evidence>
<comment type="function">
    <text evidence="4">Odorant receptor.</text>
</comment>
<comment type="subcellular location">
    <subcellularLocation>
        <location evidence="1">Cell membrane</location>
        <topology evidence="2">Multi-pass membrane protein</topology>
    </subcellularLocation>
</comment>
<comment type="polymorphism">
    <text>A stop codon in the gene coding for this protein at position Gln-19 is responsible for functional diversity thus producing a pseudogene.</text>
</comment>
<comment type="similarity">
    <text evidence="3">Belongs to the G-protein coupled receptor 1 family.</text>
</comment>
<comment type="online information" name="Human Olfactory Receptor Data Exploratorium (HORDE)">
    <link uri="http://genome.weizmann.ac.il/horde/card/index/symbol:OR5AR1"/>
</comment>
<keyword id="KW-1003">Cell membrane</keyword>
<keyword id="KW-1015">Disulfide bond</keyword>
<keyword id="KW-0297">G-protein coupled receptor</keyword>
<keyword id="KW-0325">Glycoprotein</keyword>
<keyword id="KW-0472">Membrane</keyword>
<keyword id="KW-0552">Olfaction</keyword>
<keyword id="KW-0675">Receptor</keyword>
<keyword id="KW-1185">Reference proteome</keyword>
<keyword id="KW-0716">Sensory transduction</keyword>
<keyword id="KW-0807">Transducer</keyword>
<keyword id="KW-0812">Transmembrane</keyword>
<keyword id="KW-1133">Transmembrane helix</keyword>